<proteinExistence type="inferred from homology"/>
<gene>
    <name type="ordered locus">MT2998.1</name>
</gene>
<organism>
    <name type="scientific">Mycobacterium tuberculosis (strain CDC 1551 / Oshkosh)</name>
    <dbReference type="NCBI Taxonomy" id="83331"/>
    <lineage>
        <taxon>Bacteria</taxon>
        <taxon>Bacillati</taxon>
        <taxon>Actinomycetota</taxon>
        <taxon>Actinomycetes</taxon>
        <taxon>Mycobacteriales</taxon>
        <taxon>Mycobacteriaceae</taxon>
        <taxon>Mycobacterium</taxon>
        <taxon>Mycobacterium tuberculosis complex</taxon>
    </lineage>
</organism>
<protein>
    <recommendedName>
        <fullName>Uncharacterized protein MT2998.1</fullName>
    </recommendedName>
</protein>
<evidence type="ECO:0000255" key="1"/>
<evidence type="ECO:0000256" key="2">
    <source>
        <dbReference type="SAM" id="MobiDB-lite"/>
    </source>
</evidence>
<dbReference type="EMBL" id="AE000516">
    <property type="protein sequence ID" value="AAK47326.1"/>
    <property type="molecule type" value="Genomic_DNA"/>
</dbReference>
<dbReference type="PIR" id="A70749">
    <property type="entry name" value="A70749"/>
</dbReference>
<dbReference type="RefSeq" id="WP_003900596.1">
    <property type="nucleotide sequence ID" value="NZ_KK341227.1"/>
</dbReference>
<dbReference type="KEGG" id="mtc:MT2998.1"/>
<dbReference type="HOGENOM" id="CLU_2260693_0_0_11"/>
<dbReference type="Proteomes" id="UP000001020">
    <property type="component" value="Chromosome"/>
</dbReference>
<accession>P9WL12</accession>
<accession>L0TDZ4</accession>
<accession>P65061</accession>
<accession>Q10975</accession>
<feature type="signal peptide" evidence="1">
    <location>
        <begin position="1"/>
        <end position="34"/>
    </location>
</feature>
<feature type="chain" id="PRO_0000427559" description="Uncharacterized protein MT2998.1">
    <location>
        <begin position="35"/>
        <end position="103"/>
    </location>
</feature>
<feature type="region of interest" description="Disordered" evidence="2">
    <location>
        <begin position="1"/>
        <end position="20"/>
    </location>
</feature>
<feature type="region of interest" description="Disordered" evidence="2">
    <location>
        <begin position="44"/>
        <end position="71"/>
    </location>
</feature>
<keyword id="KW-1185">Reference proteome</keyword>
<keyword id="KW-0732">Signal</keyword>
<name>Y2929_MYCTO</name>
<reference key="1">
    <citation type="journal article" date="2002" name="J. Bacteriol.">
        <title>Whole-genome comparison of Mycobacterium tuberculosis clinical and laboratory strains.</title>
        <authorList>
            <person name="Fleischmann R.D."/>
            <person name="Alland D."/>
            <person name="Eisen J.A."/>
            <person name="Carpenter L."/>
            <person name="White O."/>
            <person name="Peterson J.D."/>
            <person name="DeBoy R.T."/>
            <person name="Dodson R.J."/>
            <person name="Gwinn M.L."/>
            <person name="Haft D.H."/>
            <person name="Hickey E.K."/>
            <person name="Kolonay J.F."/>
            <person name="Nelson W.C."/>
            <person name="Umayam L.A."/>
            <person name="Ermolaeva M.D."/>
            <person name="Salzberg S.L."/>
            <person name="Delcher A."/>
            <person name="Utterback T.R."/>
            <person name="Weidman J.F."/>
            <person name="Khouri H.M."/>
            <person name="Gill J."/>
            <person name="Mikula A."/>
            <person name="Bishai W."/>
            <person name="Jacobs W.R. Jr."/>
            <person name="Venter J.C."/>
            <person name="Fraser C.M."/>
        </authorList>
    </citation>
    <scope>NUCLEOTIDE SEQUENCE [LARGE SCALE GENOMIC DNA]</scope>
    <source>
        <strain>CDC 1551 / Oshkosh</strain>
    </source>
</reference>
<sequence>MIELSYAPDVAGRRSNWPKGSGVNTWTAIRWTFAEDSPYVGTGLERMASDTHGGGGGRPVTPPPPGMHHLGCSRGVLLISSQRDAGHKTCDPAAGGTLTSVLT</sequence>